<comment type="function">
    <text evidence="1">ATPase subunit of a proteasome-like degradation complex; this subunit has chaperone activity. The binding of ATP and its subsequent hydrolysis by HslU are essential for unfolding of protein substrates subsequently hydrolyzed by HslV. HslU recognizes the N-terminal part of its protein substrates and unfolds these before they are guided to HslV for hydrolysis.</text>
</comment>
<comment type="subunit">
    <text evidence="1">A double ring-shaped homohexamer of HslV is capped on each side by a ring-shaped HslU homohexamer. The assembly of the HslU/HslV complex is dependent on binding of ATP.</text>
</comment>
<comment type="subcellular location">
    <subcellularLocation>
        <location evidence="1">Cytoplasm</location>
    </subcellularLocation>
</comment>
<comment type="similarity">
    <text evidence="1">Belongs to the ClpX chaperone family. HslU subfamily.</text>
</comment>
<evidence type="ECO:0000255" key="1">
    <source>
        <dbReference type="HAMAP-Rule" id="MF_00249"/>
    </source>
</evidence>
<keyword id="KW-0067">ATP-binding</keyword>
<keyword id="KW-0143">Chaperone</keyword>
<keyword id="KW-0963">Cytoplasm</keyword>
<keyword id="KW-0547">Nucleotide-binding</keyword>
<keyword id="KW-1185">Reference proteome</keyword>
<keyword id="KW-0346">Stress response</keyword>
<organism>
    <name type="scientific">Shewanella sediminis (strain HAW-EB3)</name>
    <dbReference type="NCBI Taxonomy" id="425104"/>
    <lineage>
        <taxon>Bacteria</taxon>
        <taxon>Pseudomonadati</taxon>
        <taxon>Pseudomonadota</taxon>
        <taxon>Gammaproteobacteria</taxon>
        <taxon>Alteromonadales</taxon>
        <taxon>Shewanellaceae</taxon>
        <taxon>Shewanella</taxon>
    </lineage>
</organism>
<gene>
    <name evidence="1" type="primary">hslU</name>
    <name type="ordered locus">Ssed_0530</name>
</gene>
<accession>A8FQL9</accession>
<reference key="1">
    <citation type="submission" date="2007-08" db="EMBL/GenBank/DDBJ databases">
        <title>Complete sequence of Shewanella sediminis HAW-EB3.</title>
        <authorList>
            <consortium name="US DOE Joint Genome Institute"/>
            <person name="Copeland A."/>
            <person name="Lucas S."/>
            <person name="Lapidus A."/>
            <person name="Barry K."/>
            <person name="Glavina del Rio T."/>
            <person name="Dalin E."/>
            <person name="Tice H."/>
            <person name="Pitluck S."/>
            <person name="Chertkov O."/>
            <person name="Brettin T."/>
            <person name="Bruce D."/>
            <person name="Detter J.C."/>
            <person name="Han C."/>
            <person name="Schmutz J."/>
            <person name="Larimer F."/>
            <person name="Land M."/>
            <person name="Hauser L."/>
            <person name="Kyrpides N."/>
            <person name="Kim E."/>
            <person name="Zhao J.-S."/>
            <person name="Richardson P."/>
        </authorList>
    </citation>
    <scope>NUCLEOTIDE SEQUENCE [LARGE SCALE GENOMIC DNA]</scope>
    <source>
        <strain>HAW-EB3</strain>
    </source>
</reference>
<protein>
    <recommendedName>
        <fullName evidence="1">ATP-dependent protease ATPase subunit HslU</fullName>
    </recommendedName>
    <alternativeName>
        <fullName evidence="1">Unfoldase HslU</fullName>
    </alternativeName>
</protein>
<sequence length="441" mass="50053">MSEMTPREIVHELDTHIIGQHDAKRSVAIALRNRWRRMQLDVDFRQEVTPKNILMIGPTGVGKTEIARRLAKLAKAPFIKVEATKFTEVGYVGKEVEQIIRDLTDSAIKMTREDQMKKCKFKAEEAAEERILDALLPKPKEDWDNEKPDDSATRQIFRKKLREGQLDDKEIEIDVAAPQVGIEIMSPPGMEEMTNQLQSMFQNMGPGDSKRRKMPIKEAYKLMIEEEAAKLVNQDDMKEQAIELVEQHGIVFLDEIDKICKRGESSGPDVSREGVQRDLLPLVEGCTVNTKHGMVKTDHILFIASGAFQMSKPSDLIPELQGRLPIRVELSALTADDFKRILTEPHASLTEQHVAMMGTEDVKIEFTEDGIESIAQAAWQVNERTENIGARRLHTVMERLMEDLSYDASDKSGNTFVIDAEYVSSHLDDLVQDEDLSRFIL</sequence>
<dbReference type="EMBL" id="CP000821">
    <property type="protein sequence ID" value="ABV35142.1"/>
    <property type="molecule type" value="Genomic_DNA"/>
</dbReference>
<dbReference type="RefSeq" id="WP_012140879.1">
    <property type="nucleotide sequence ID" value="NC_009831.1"/>
</dbReference>
<dbReference type="SMR" id="A8FQL9"/>
<dbReference type="STRING" id="425104.Ssed_0530"/>
<dbReference type="KEGG" id="sse:Ssed_0530"/>
<dbReference type="eggNOG" id="COG1220">
    <property type="taxonomic scope" value="Bacteria"/>
</dbReference>
<dbReference type="HOGENOM" id="CLU_033123_0_0_6"/>
<dbReference type="OrthoDB" id="9804062at2"/>
<dbReference type="Proteomes" id="UP000002015">
    <property type="component" value="Chromosome"/>
</dbReference>
<dbReference type="GO" id="GO:0009376">
    <property type="term" value="C:HslUV protease complex"/>
    <property type="evidence" value="ECO:0007669"/>
    <property type="project" value="UniProtKB-UniRule"/>
</dbReference>
<dbReference type="GO" id="GO:0005524">
    <property type="term" value="F:ATP binding"/>
    <property type="evidence" value="ECO:0007669"/>
    <property type="project" value="UniProtKB-UniRule"/>
</dbReference>
<dbReference type="GO" id="GO:0016887">
    <property type="term" value="F:ATP hydrolysis activity"/>
    <property type="evidence" value="ECO:0007669"/>
    <property type="project" value="InterPro"/>
</dbReference>
<dbReference type="GO" id="GO:0008233">
    <property type="term" value="F:peptidase activity"/>
    <property type="evidence" value="ECO:0007669"/>
    <property type="project" value="InterPro"/>
</dbReference>
<dbReference type="GO" id="GO:0036402">
    <property type="term" value="F:proteasome-activating activity"/>
    <property type="evidence" value="ECO:0007669"/>
    <property type="project" value="UniProtKB-UniRule"/>
</dbReference>
<dbReference type="GO" id="GO:0043335">
    <property type="term" value="P:protein unfolding"/>
    <property type="evidence" value="ECO:0007669"/>
    <property type="project" value="UniProtKB-UniRule"/>
</dbReference>
<dbReference type="GO" id="GO:0051603">
    <property type="term" value="P:proteolysis involved in protein catabolic process"/>
    <property type="evidence" value="ECO:0007669"/>
    <property type="project" value="TreeGrafter"/>
</dbReference>
<dbReference type="CDD" id="cd19498">
    <property type="entry name" value="RecA-like_HslU"/>
    <property type="match status" value="1"/>
</dbReference>
<dbReference type="FunFam" id="1.10.8.10:FF:000028">
    <property type="entry name" value="ATP-dependent protease ATPase subunit HslU"/>
    <property type="match status" value="1"/>
</dbReference>
<dbReference type="FunFam" id="1.10.8.60:FF:000027">
    <property type="entry name" value="ATP-dependent protease ATPase subunit HslU"/>
    <property type="match status" value="1"/>
</dbReference>
<dbReference type="FunFam" id="3.40.50.300:FF:000213">
    <property type="entry name" value="ATP-dependent protease ATPase subunit HslU"/>
    <property type="match status" value="1"/>
</dbReference>
<dbReference type="FunFam" id="3.40.50.300:FF:000220">
    <property type="entry name" value="ATP-dependent protease ATPase subunit HslU"/>
    <property type="match status" value="1"/>
</dbReference>
<dbReference type="Gene3D" id="1.10.8.60">
    <property type="match status" value="1"/>
</dbReference>
<dbReference type="Gene3D" id="3.40.50.300">
    <property type="entry name" value="P-loop containing nucleotide triphosphate hydrolases"/>
    <property type="match status" value="2"/>
</dbReference>
<dbReference type="HAMAP" id="MF_00249">
    <property type="entry name" value="HslU"/>
    <property type="match status" value="1"/>
</dbReference>
<dbReference type="InterPro" id="IPR003593">
    <property type="entry name" value="AAA+_ATPase"/>
</dbReference>
<dbReference type="InterPro" id="IPR050052">
    <property type="entry name" value="ATP-dep_Clp_protease_ClpX"/>
</dbReference>
<dbReference type="InterPro" id="IPR003959">
    <property type="entry name" value="ATPase_AAA_core"/>
</dbReference>
<dbReference type="InterPro" id="IPR019489">
    <property type="entry name" value="Clp_ATPase_C"/>
</dbReference>
<dbReference type="InterPro" id="IPR004491">
    <property type="entry name" value="HslU"/>
</dbReference>
<dbReference type="InterPro" id="IPR027417">
    <property type="entry name" value="P-loop_NTPase"/>
</dbReference>
<dbReference type="NCBIfam" id="TIGR00390">
    <property type="entry name" value="hslU"/>
    <property type="match status" value="1"/>
</dbReference>
<dbReference type="NCBIfam" id="NF003544">
    <property type="entry name" value="PRK05201.1"/>
    <property type="match status" value="1"/>
</dbReference>
<dbReference type="PANTHER" id="PTHR48102">
    <property type="entry name" value="ATP-DEPENDENT CLP PROTEASE ATP-BINDING SUBUNIT CLPX-LIKE, MITOCHONDRIAL-RELATED"/>
    <property type="match status" value="1"/>
</dbReference>
<dbReference type="PANTHER" id="PTHR48102:SF3">
    <property type="entry name" value="ATP-DEPENDENT PROTEASE ATPASE SUBUNIT HSLU"/>
    <property type="match status" value="1"/>
</dbReference>
<dbReference type="Pfam" id="PF00004">
    <property type="entry name" value="AAA"/>
    <property type="match status" value="1"/>
</dbReference>
<dbReference type="Pfam" id="PF07724">
    <property type="entry name" value="AAA_2"/>
    <property type="match status" value="1"/>
</dbReference>
<dbReference type="SMART" id="SM00382">
    <property type="entry name" value="AAA"/>
    <property type="match status" value="1"/>
</dbReference>
<dbReference type="SMART" id="SM01086">
    <property type="entry name" value="ClpB_D2-small"/>
    <property type="match status" value="1"/>
</dbReference>
<dbReference type="SUPFAM" id="SSF52540">
    <property type="entry name" value="P-loop containing nucleoside triphosphate hydrolases"/>
    <property type="match status" value="1"/>
</dbReference>
<name>HSLU_SHESH</name>
<feature type="chain" id="PRO_1000078457" description="ATP-dependent protease ATPase subunit HslU">
    <location>
        <begin position="1"/>
        <end position="441"/>
    </location>
</feature>
<feature type="binding site" evidence="1">
    <location>
        <position position="18"/>
    </location>
    <ligand>
        <name>ATP</name>
        <dbReference type="ChEBI" id="CHEBI:30616"/>
    </ligand>
</feature>
<feature type="binding site" evidence="1">
    <location>
        <begin position="60"/>
        <end position="65"/>
    </location>
    <ligand>
        <name>ATP</name>
        <dbReference type="ChEBI" id="CHEBI:30616"/>
    </ligand>
</feature>
<feature type="binding site" evidence="1">
    <location>
        <position position="254"/>
    </location>
    <ligand>
        <name>ATP</name>
        <dbReference type="ChEBI" id="CHEBI:30616"/>
    </ligand>
</feature>
<feature type="binding site" evidence="1">
    <location>
        <position position="319"/>
    </location>
    <ligand>
        <name>ATP</name>
        <dbReference type="ChEBI" id="CHEBI:30616"/>
    </ligand>
</feature>
<feature type="binding site" evidence="1">
    <location>
        <position position="391"/>
    </location>
    <ligand>
        <name>ATP</name>
        <dbReference type="ChEBI" id="CHEBI:30616"/>
    </ligand>
</feature>
<proteinExistence type="inferred from homology"/>